<organism>
    <name type="scientific">Homo sapiens</name>
    <name type="common">Human</name>
    <dbReference type="NCBI Taxonomy" id="9606"/>
    <lineage>
        <taxon>Eukaryota</taxon>
        <taxon>Metazoa</taxon>
        <taxon>Chordata</taxon>
        <taxon>Craniata</taxon>
        <taxon>Vertebrata</taxon>
        <taxon>Euteleostomi</taxon>
        <taxon>Mammalia</taxon>
        <taxon>Eutheria</taxon>
        <taxon>Euarchontoglires</taxon>
        <taxon>Primates</taxon>
        <taxon>Haplorrhini</taxon>
        <taxon>Catarrhini</taxon>
        <taxon>Hominidae</taxon>
        <taxon>Homo</taxon>
    </lineage>
</organism>
<proteinExistence type="evidence at protein level"/>
<comment type="function">
    <text evidence="1 6 14 15 16 18 19 20 21 22">Calcium sensor that plays a key role in processes such as endoplasmic reticulum (ER)-Golgi vesicular transport, endosomal biogenesis or membrane repair. Acts as an adapter that bridges unrelated proteins or stabilizes weak protein-protein complexes in response to calcium: calcium-binding triggers exposure of apolar surface, promoting interaction with different sets of proteins thanks to 3 different hydrophobic pockets, leading to translocation to membranes (PubMed:20691033, PubMed:25667979). Involved in ER-Golgi transport by promoting the association between PDCD6IP and TSG101, thereby bridging together the ESCRT-III and ESCRT-I complexes (PubMed:19520058). Together with PEF1, acts as a calcium-dependent adapter for the BCR(KLHL12) complex, a complex involved in ER-Golgi transport by regulating the size of COPII coats (PubMed:27716508). In response to cytosolic calcium increase, the heterodimer formed with PEF1 interacts with, and bridges together the BCR(KLHL12) complex and SEC31 (SEC31A or SEC31B), promoting monoubiquitination of SEC31 and subsequent collagen export, which is required for neural crest specification (PubMed:27716508). Involved in the regulation of the distribution and function of MCOLN1 in the endosomal pathway (PubMed:19864416). Promotes localization and polymerization of TFG at endoplasmic reticulum exit site (PubMed:27813252). Required for T-cell receptor-, Fas-, and glucocorticoid-induced apoptosis (By similarity). May mediate Ca(2+)-regulated signals along the death pathway: interaction with DAPK1 can accelerate apoptotic cell death by increasing caspase-3 activity (PubMed:16132846). Its role in apoptosis may however be indirect, as suggested by knockout experiments (By similarity). May inhibit KDR/VEGFR2-dependent angiogenesis; the function involves inhibition of VEGF-induced phosphorylation of the Akt signaling pathway (PubMed:21893193). In case of infection by HIV-1 virus, indirectly inhibits HIV-1 production by affecting viral Gag expression and distribution (PubMed:27784779).</text>
</comment>
<comment type="function">
    <molecule>Isoform 2</molecule>
    <text evidence="1">Has a lower Ca(2+) affinity than isoform 1 (By similarity).</text>
</comment>
<comment type="subunit">
    <text evidence="1 3 4 5 6 7 9 10 11 12 15 16 18 19 20 21 22">Homodimer and heterodimer; heterodimerizes (via the EF-hand 5) with PEF1 (PubMed:11278427, PubMed:11883899, PubMed:27784779). Isoform 1 and isoform 2 self-associate; probably forming homodimers. Interacts with CPNE4 (via VWFA domain) (By similarity). Interacts with PDCD6IP; the interaction is calcium-dependent (PubMed:16957052, PubMed:18256029, PubMed:18940611, PubMed:20691033, PubMed:25667979). Interacts with RBM22 (PubMed:17045351). Interacts with PLSCR4 (PubMed:18256029). Interacts with ANXA7 and TSG101 (PubMed:18256029, PubMed:20691033). Interacts with DAPK1 (PubMed:16132846). Interacts with SEC31A; the interaction is calcium-dependent and promotes monoubiquitination of SEC31A (PubMed:16957052, PubMed:18256029, PubMed:25667979, PubMed:27716508). Interacts with ANXA11 (via N-terminus); the interaction is calcium-dependent (PubMed:11883939, PubMed:18256029, PubMed:18940611). Interacts with PLSCR3 (via N-terminus); the interaction is calcium-dependent (PubMed:18256029). Interacts with MCOLN1; the interaction is calcium-dependent (PubMed:19864416). Interacts with KDR; the interaction is calcium-dependent (PubMed:21893193). Interacts with HEBP2; the interaction is calcium-dependent (PubMed:27784779). Interacts with TFG (PubMed:27813252). Isoform 1: Interacts with SHISA5, leading to stabilize it (PubMed:17889823). Isoform 2: Does not interact with SHISA5 (PubMed:17889823). Isoform 2: Does not interact with PDCD6IP, TSG101, ANXA7 and ANXA11 (PubMed:18256029, PubMed:20691033).</text>
</comment>
<comment type="interaction">
    <interactant intactId="EBI-352915">
        <id>O75340</id>
    </interactant>
    <interactant intactId="EBI-715243">
        <id>P50995</id>
        <label>ANXA11</label>
    </interactant>
    <organismsDiffer>false</organismsDiffer>
    <experiments>5</experiments>
</comment>
<comment type="interaction">
    <interactant intactId="EBI-352915">
        <id>O75340</id>
    </interactant>
    <interactant intactId="EBI-10245225">
        <id>Q5T0G8</id>
        <label>ANXA11</label>
    </interactant>
    <organismsDiffer>false</organismsDiffer>
    <experiments>3</experiments>
</comment>
<comment type="interaction">
    <interactant intactId="EBI-352915">
        <id>O75340</id>
    </interactant>
    <interactant intactId="EBI-2949658">
        <id>O95429</id>
        <label>BAG4</label>
    </interactant>
    <organismsDiffer>false</organismsDiffer>
    <experiments>3</experiments>
</comment>
<comment type="interaction">
    <interactant intactId="EBI-352915">
        <id>O75340</id>
    </interactant>
    <interactant intactId="EBI-358616">
        <id>P53355</id>
        <label>DAPK1</label>
    </interactant>
    <organismsDiffer>false</organismsDiffer>
    <experiments>3</experiments>
</comment>
<comment type="interaction">
    <interactant intactId="EBI-352915">
        <id>O75340</id>
    </interactant>
    <interactant intactId="EBI-715074">
        <id>Q13561</id>
        <label>DCTN2</label>
    </interactant>
    <organismsDiffer>false</organismsDiffer>
    <experiments>4</experiments>
</comment>
<comment type="interaction">
    <interactant intactId="EBI-352915">
        <id>O75340</id>
    </interactant>
    <interactant intactId="EBI-741593">
        <id>Q9Y5Z4</id>
        <label>HEBP2</label>
    </interactant>
    <organismsDiffer>false</organismsDiffer>
    <experiments>9</experiments>
</comment>
<comment type="interaction">
    <interactant intactId="EBI-352915">
        <id>O75340</id>
    </interactant>
    <interactant intactId="EBI-1005487">
        <id>P35968</id>
        <label>KDR</label>
    </interactant>
    <organismsDiffer>false</organismsDiffer>
    <experiments>4</experiments>
</comment>
<comment type="interaction">
    <interactant intactId="EBI-352915">
        <id>O75340</id>
    </interactant>
    <interactant intactId="EBI-352915">
        <id>O75340</id>
        <label>PDCD6</label>
    </interactant>
    <organismsDiffer>false</organismsDiffer>
    <experiments>4</experiments>
</comment>
<comment type="interaction">
    <interactant intactId="EBI-352915">
        <id>O75340</id>
    </interactant>
    <interactant intactId="EBI-310624">
        <id>Q8WUM4</id>
        <label>PDCD6IP</label>
    </interactant>
    <organismsDiffer>false</organismsDiffer>
    <experiments>13</experiments>
</comment>
<comment type="interaction">
    <interactant intactId="EBI-352915">
        <id>O75340</id>
    </interactant>
    <interactant intactId="EBI-724639">
        <id>Q9UBV8</id>
        <label>PEF1</label>
    </interactant>
    <organismsDiffer>false</organismsDiffer>
    <experiments>12</experiments>
</comment>
<comment type="interaction">
    <interactant intactId="EBI-352915">
        <id>O75340</id>
    </interactant>
    <interactant intactId="EBI-750734">
        <id>Q9NRY6</id>
        <label>PLSCR3</label>
    </interactant>
    <organismsDiffer>false</organismsDiffer>
    <experiments>9</experiments>
</comment>
<comment type="interaction">
    <interactant intactId="EBI-352915">
        <id>O75340</id>
    </interactant>
    <interactant intactId="EBI-11998870">
        <id>A6NJB7-2</id>
        <label>PRR19</label>
    </interactant>
    <organismsDiffer>false</organismsDiffer>
    <experiments>3</experiments>
</comment>
<comment type="interaction">
    <interactant intactId="EBI-352915">
        <id>O75340</id>
    </interactant>
    <interactant intactId="EBI-724478">
        <id>Q9H3S7</id>
        <label>PTPN23</label>
    </interactant>
    <organismsDiffer>false</organismsDiffer>
    <experiments>3</experiments>
</comment>
<comment type="interaction">
    <interactant intactId="EBI-352915">
        <id>O75340</id>
    </interactant>
    <interactant intactId="EBI-1767898">
        <id>O94979</id>
        <label>SEC31A</label>
    </interactant>
    <organismsDiffer>false</organismsDiffer>
    <experiments>7</experiments>
</comment>
<comment type="interaction">
    <interactant intactId="EBI-352915">
        <id>O75340</id>
    </interactant>
    <interactant intactId="EBI-2559305">
        <id>A5D8V6</id>
        <label>VPS37C</label>
    </interactant>
    <organismsDiffer>false</organismsDiffer>
    <experiments>6</experiments>
</comment>
<comment type="subcellular location">
    <subcellularLocation>
        <location evidence="7 22">Endoplasmic reticulum membrane</location>
        <topology evidence="7">Peripheral membrane protein</topology>
    </subcellularLocation>
    <subcellularLocation>
        <location evidence="20">Cytoplasmic vesicle</location>
        <location evidence="20">COPII-coated vesicle membrane</location>
    </subcellularLocation>
    <subcellularLocation>
        <location evidence="20 21">Cytoplasm</location>
    </subcellularLocation>
    <subcellularLocation>
        <location evidence="9 17 21">Nucleus</location>
    </subcellularLocation>
    <subcellularLocation>
        <location evidence="15">Endosome</location>
    </subcellularLocation>
    <text evidence="9 17 20 22">Interaction with RBM22 induces relocalization from the cytoplasm to the nucleus (PubMed:17045351). Translocated from the cytoplasm to the nucleus after heat shock cell treatment. Accumulates in cytoplasmic vesicle-like organelles after heat shock treatment, which may represent stress granules (PubMed:21122810). In response to calcium increase, relocates from cytoplasm to COPII vesicle coat (PubMed:27716508). Localizes to endoplasmic reticulum exit site (ERES) (PubMed:27813252).</text>
</comment>
<comment type="alternative products">
    <event type="alternative splicing"/>
    <isoform>
        <id>O75340-1</id>
        <name>1</name>
        <sequence type="displayed"/>
    </isoform>
    <isoform>
        <id>O75340-2</id>
        <name>2</name>
        <name>ALG-2(delta)GF122</name>
        <sequence type="described" ref="VSP_045113"/>
    </isoform>
    <isoform>
        <id>O75340-3</id>
        <name>3</name>
        <sequence type="described" ref="VSP_045542"/>
    </isoform>
</comment>
<comment type="domain">
    <text evidence="16 19">Interacts with different set of proteins thanks to 3 different hydrophobic pockets (PubMed:20691033, PubMed:25667979). Hydrophobic pockets 1 and 2, which mediate interaction with PDCD6IP, are largely formed by residues from EF-hand 3 (EF3) to 5 (EF5), as well as by Tyr-180 (EF5) of a dimerizing molecule (Pocket 1) and from EF-hand (EF2) to 4 (EF4) (Pocket 2) (PubMed:20691033). Hydrophobic pocket 3, which mediates interaction with SEC31A, is mainly formed by residues from EF-hand 1 (EF1) to 3 (EF3) (PubMed:25667979).</text>
</comment>
<comment type="domain">
    <text evidence="1 12 16">EF-hand 1 (EF1) and 3 (EF3) are the high-affinity calcium-binding sites, while EF-hand 5 (EF5) binds calcium with low-affinity (PubMed:18940611, PubMed:20691033). A one-residue insertion in the EF5-binding loop prevents the glutamyl residue at the C-terminal end of the loop from serving as the canonical bidentate calcium ligand (PubMed:18940611, PubMed:20691033). EF5 acts as a high-affinity magnesium-binding domain instead (By similarity). Magnesium, may affect dimerization (By similarity). EF5 may bind either calcium or magnesium depending on the context (By similarity).</text>
</comment>
<comment type="online information" name="Atlas of Genetics and Cytogenetics in Oncology and Haematology">
    <link uri="https://atlasgeneticsoncology.org/gene/43402/PDCD6"/>
</comment>
<gene>
    <name type="primary">PDCD6</name>
    <name evidence="1" type="synonym">ALG2</name>
</gene>
<sequence>MAAYSYRPGPGAGPGPAAGAALPDQSFLWNVFQRVDKDRSGVISDTELQQALSNGTWTPFNPVTVRSIISMFDRENKAGVNFSEFTGVWKYITDWQNVFRTYDRDNSGMIDKNELKQALSGFGYRLSDQFHDILIRKFDRQGRGQIAFDDFIQGCIVLQRLTDIFRRYDTDQDGWIQVSYEQYLSMVFSIV</sequence>
<feature type="initiator methionine" description="Removed" evidence="25">
    <location>
        <position position="1"/>
    </location>
</feature>
<feature type="chain" id="PRO_0000073729" description="Programmed cell death protein 6">
    <location>
        <begin position="2"/>
        <end position="191"/>
    </location>
</feature>
<feature type="domain" description="EF-hand 1" evidence="2">
    <location>
        <begin position="23"/>
        <end position="58"/>
    </location>
</feature>
<feature type="domain" description="EF-hand 2" evidence="24">
    <location>
        <begin position="59"/>
        <end position="89"/>
    </location>
</feature>
<feature type="domain" description="EF-hand 3" evidence="2">
    <location>
        <begin position="90"/>
        <end position="125"/>
    </location>
</feature>
<feature type="domain" description="EF-hand 4" evidence="24">
    <location>
        <begin position="126"/>
        <end position="161"/>
    </location>
</feature>
<feature type="domain" description="EF-hand 5" evidence="2">
    <location>
        <begin position="162"/>
        <end position="191"/>
    </location>
</feature>
<feature type="binding site" evidence="2 12 13 16 19">
    <location>
        <position position="36"/>
    </location>
    <ligand>
        <name>Ca(2+)</name>
        <dbReference type="ChEBI" id="CHEBI:29108"/>
        <label>1</label>
    </ligand>
</feature>
<feature type="binding site" evidence="2 12 13 16 19">
    <location>
        <position position="38"/>
    </location>
    <ligand>
        <name>Ca(2+)</name>
        <dbReference type="ChEBI" id="CHEBI:29108"/>
        <label>1</label>
    </ligand>
</feature>
<feature type="binding site" evidence="2 12 13 16 19">
    <location>
        <position position="40"/>
    </location>
    <ligand>
        <name>Ca(2+)</name>
        <dbReference type="ChEBI" id="CHEBI:29108"/>
        <label>1</label>
    </ligand>
</feature>
<feature type="binding site" evidence="12 13 16 19">
    <location>
        <position position="42"/>
    </location>
    <ligand>
        <name>Ca(2+)</name>
        <dbReference type="ChEBI" id="CHEBI:29108"/>
        <label>1</label>
    </ligand>
</feature>
<feature type="binding site" evidence="2 12 13 16 19">
    <location>
        <position position="47"/>
    </location>
    <ligand>
        <name>Ca(2+)</name>
        <dbReference type="ChEBI" id="CHEBI:29108"/>
        <label>1</label>
    </ligand>
</feature>
<feature type="binding site" evidence="2 12 13 16 19">
    <location>
        <position position="103"/>
    </location>
    <ligand>
        <name>Ca(2+)</name>
        <dbReference type="ChEBI" id="CHEBI:29108"/>
        <label>2</label>
    </ligand>
</feature>
<feature type="binding site" evidence="2 12 13 16 19">
    <location>
        <position position="105"/>
    </location>
    <ligand>
        <name>Ca(2+)</name>
        <dbReference type="ChEBI" id="CHEBI:29108"/>
        <label>2</label>
    </ligand>
</feature>
<feature type="binding site" evidence="2 12 13 16 19">
    <location>
        <position position="107"/>
    </location>
    <ligand>
        <name>Ca(2+)</name>
        <dbReference type="ChEBI" id="CHEBI:29108"/>
        <label>2</label>
    </ligand>
</feature>
<feature type="binding site" evidence="2 12 13 16 19">
    <location>
        <position position="109"/>
    </location>
    <ligand>
        <name>Ca(2+)</name>
        <dbReference type="ChEBI" id="CHEBI:29108"/>
        <label>2</label>
    </ligand>
</feature>
<feature type="binding site" evidence="2 12 13 16 19">
    <location>
        <position position="114"/>
    </location>
    <ligand>
        <name>Ca(2+)</name>
        <dbReference type="ChEBI" id="CHEBI:29108"/>
        <label>2</label>
    </ligand>
</feature>
<feature type="binding site" evidence="1">
    <location>
        <position position="169"/>
    </location>
    <ligand>
        <name>Mg(2+)</name>
        <dbReference type="ChEBI" id="CHEBI:18420"/>
    </ligand>
</feature>
<feature type="binding site" evidence="1">
    <location>
        <position position="171"/>
    </location>
    <ligand>
        <name>Mg(2+)</name>
        <dbReference type="ChEBI" id="CHEBI:18420"/>
    </ligand>
</feature>
<feature type="binding site" evidence="1">
    <location>
        <position position="173"/>
    </location>
    <ligand>
        <name>Mg(2+)</name>
        <dbReference type="ChEBI" id="CHEBI:18420"/>
    </ligand>
</feature>
<feature type="binding site" evidence="1">
    <location>
        <position position="175"/>
    </location>
    <ligand>
        <name>Mg(2+)</name>
        <dbReference type="ChEBI" id="CHEBI:18420"/>
    </ligand>
</feature>
<feature type="modified residue" description="N-acetylalanine" evidence="25">
    <location>
        <position position="2"/>
    </location>
</feature>
<feature type="splice variant" id="VSP_045542" description="In isoform 3." evidence="23">
    <location>
        <begin position="70"/>
        <end position="191"/>
    </location>
</feature>
<feature type="splice variant" id="VSP_045113" description="In isoform 2." evidence="23">
    <location>
        <begin position="121"/>
        <end position="122"/>
    </location>
</feature>
<feature type="sequence variant" id="VAR_035459" description="In a breast cancer sample; somatic mutation." evidence="8">
    <original>G</original>
    <variation>C</variation>
    <location>
        <position position="123"/>
    </location>
</feature>
<feature type="mutagenesis site" description="Loss of interaction with SEC31A and PLSCR3, and loss of localization to the endoplasmic reticulum; when associated with A-114." evidence="7 11 20">
    <original>E</original>
    <variation>A</variation>
    <location>
        <position position="47"/>
    </location>
</feature>
<feature type="mutagenesis site" description="Strongly impaired interaction with SEC31A. Slightly reduced interaction with PDCD6IP." evidence="19">
    <original>L</original>
    <variation>A</variation>
    <location>
        <position position="52"/>
    </location>
</feature>
<feature type="mutagenesis site" description="Slightly reduced interaction with SEC31A. Does not affect interaction with PDCD6IP." evidence="19">
    <original>S</original>
    <variation>G</variation>
    <location>
        <position position="53"/>
    </location>
</feature>
<feature type="mutagenesis site" description="Does not affect interaction with SEC31A. Reduces the interaction with HEBP2, PDCD6IP and ANXA7." evidence="11 19 21">
    <original>W</original>
    <variation>A</variation>
    <location>
        <position position="57"/>
    </location>
</feature>
<feature type="mutagenesis site" description="Abolishes the interaction with SEC31A, PDCD6IP, ANXA7 and ANXA11." evidence="11 20">
    <original>F</original>
    <variation>A</variation>
    <location>
        <position position="60"/>
    </location>
</feature>
<feature type="mutagenesis site" description="Strongly impaired interaction with SEC31A and TFG. Does not affect interaction with PDCD6IP." evidence="19 22">
    <original>F</original>
    <variation>A</variation>
    <location>
        <position position="85"/>
    </location>
</feature>
<feature type="mutagenesis site" description="Does not affect interaction with SEC31A. Does not affect interaction with PDCD6IP." evidence="19">
    <original>W</original>
    <variation>A</variation>
    <location>
        <position position="89"/>
    </location>
</feature>
<feature type="mutagenesis site" description="Abolishes the interaction with PDCD6IP, ANXA7 and ANXA11." evidence="11">
    <original>Y</original>
    <variation>A</variation>
    <location>
        <position position="91"/>
    </location>
</feature>
<feature type="mutagenesis site" description="Does not affect interaction with SEC31A. Does not affect interaction with PDCD6IP." evidence="19">
    <original>I</original>
    <variation>A</variation>
    <location>
        <position position="92"/>
    </location>
</feature>
<feature type="mutagenesis site" description="Abolishes the interaction with PDCD6IP, ANXA7 and ANXA11." evidence="11">
    <original>W</original>
    <variation>A</variation>
    <location>
        <position position="95"/>
    </location>
</feature>
<feature type="mutagenesis site" description="Loss of interaction with SEC31A and PLSCR3, and loss of localization to the endoplasmic reticulum; when associated with A-47." evidence="7 11">
    <original>E</original>
    <variation>A</variation>
    <location>
        <position position="114"/>
    </location>
</feature>
<feature type="mutagenesis site" description="Increases interaction with PDCD6IP and ANXA7. Impairs interaction with ANXA11. Augments stauroporine-induced cell death." evidence="16">
    <original>F</original>
    <variation>A</variation>
    <location>
        <position position="122"/>
    </location>
</feature>
<feature type="mutagenesis site" description="Increases interaction with PDCD6IP. Impairs interaction with ANXA11." evidence="16">
    <original>F</original>
    <variation>G</variation>
    <location>
        <position position="122"/>
    </location>
</feature>
<feature type="mutagenesis site" description="Increases interaction with PDCD6IP. Impairs interaction with ANAX7 and ANXA11." evidence="16">
    <original>F</original>
    <variation>S</variation>
    <location>
        <position position="122"/>
    </location>
</feature>
<feature type="mutagenesis site" description="Impairs interaction with ANXA11." evidence="16">
    <original>F</original>
    <variation>W</variation>
    <location>
        <position position="122"/>
    </location>
</feature>
<feature type="mutagenesis site" description="Slightly reduced interaction with SEC31A. Does not affect interaction with PDCD6IP." evidence="19">
    <original>F</original>
    <variation>S</variation>
    <location>
        <position position="148"/>
    </location>
</feature>
<feature type="mutagenesis site" description="Abolishes the interaction with PDCD6IP, TSG101, ANXA7 and ANXA11. Does not affect interaction with TFG and SEC31A." evidence="11 22">
    <original>Y</original>
    <variation>A</variation>
    <location>
        <position position="180"/>
    </location>
</feature>
<feature type="helix" evidence="26">
    <location>
        <begin position="26"/>
        <end position="35"/>
    </location>
</feature>
<feature type="strand" evidence="28">
    <location>
        <begin position="36"/>
        <end position="40"/>
    </location>
</feature>
<feature type="strand" evidence="27">
    <location>
        <begin position="41"/>
        <end position="43"/>
    </location>
</feature>
<feature type="helix" evidence="26">
    <location>
        <begin position="45"/>
        <end position="51"/>
    </location>
</feature>
<feature type="strand" evidence="26">
    <location>
        <begin position="55"/>
        <end position="58"/>
    </location>
</feature>
<feature type="helix" evidence="26">
    <location>
        <begin position="62"/>
        <end position="72"/>
    </location>
</feature>
<feature type="strand" evidence="26">
    <location>
        <begin position="74"/>
        <end position="80"/>
    </location>
</feature>
<feature type="helix" evidence="26">
    <location>
        <begin position="82"/>
        <end position="102"/>
    </location>
</feature>
<feature type="strand" evidence="26">
    <location>
        <begin position="107"/>
        <end position="110"/>
    </location>
</feature>
<feature type="helix" evidence="26">
    <location>
        <begin position="112"/>
        <end position="121"/>
    </location>
</feature>
<feature type="helix" evidence="26">
    <location>
        <begin position="128"/>
        <end position="138"/>
    </location>
</feature>
<feature type="strand" evidence="26">
    <location>
        <begin position="143"/>
        <end position="147"/>
    </location>
</feature>
<feature type="helix" evidence="26">
    <location>
        <begin position="148"/>
        <end position="168"/>
    </location>
</feature>
<feature type="strand" evidence="26">
    <location>
        <begin position="172"/>
        <end position="174"/>
    </location>
</feature>
<feature type="helix" evidence="26">
    <location>
        <begin position="180"/>
        <end position="188"/>
    </location>
</feature>
<evidence type="ECO:0000250" key="1">
    <source>
        <dbReference type="UniProtKB" id="P12815"/>
    </source>
</evidence>
<evidence type="ECO:0000255" key="2">
    <source>
        <dbReference type="PROSITE-ProRule" id="PRU00448"/>
    </source>
</evidence>
<evidence type="ECO:0000269" key="3">
    <source>
    </source>
</evidence>
<evidence type="ECO:0000269" key="4">
    <source>
    </source>
</evidence>
<evidence type="ECO:0000269" key="5">
    <source>
    </source>
</evidence>
<evidence type="ECO:0000269" key="6">
    <source>
    </source>
</evidence>
<evidence type="ECO:0000269" key="7">
    <source>
    </source>
</evidence>
<evidence type="ECO:0000269" key="8">
    <source>
    </source>
</evidence>
<evidence type="ECO:0000269" key="9">
    <source>
    </source>
</evidence>
<evidence type="ECO:0000269" key="10">
    <source>
    </source>
</evidence>
<evidence type="ECO:0000269" key="11">
    <source>
    </source>
</evidence>
<evidence type="ECO:0000269" key="12">
    <source>
    </source>
</evidence>
<evidence type="ECO:0000269" key="13">
    <source>
    </source>
</evidence>
<evidence type="ECO:0000269" key="14">
    <source>
    </source>
</evidence>
<evidence type="ECO:0000269" key="15">
    <source>
    </source>
</evidence>
<evidence type="ECO:0000269" key="16">
    <source>
    </source>
</evidence>
<evidence type="ECO:0000269" key="17">
    <source>
    </source>
</evidence>
<evidence type="ECO:0000269" key="18">
    <source>
    </source>
</evidence>
<evidence type="ECO:0000269" key="19">
    <source>
    </source>
</evidence>
<evidence type="ECO:0000269" key="20">
    <source>
    </source>
</evidence>
<evidence type="ECO:0000269" key="21">
    <source>
    </source>
</evidence>
<evidence type="ECO:0000269" key="22">
    <source>
    </source>
</evidence>
<evidence type="ECO:0000303" key="23">
    <source>
    </source>
</evidence>
<evidence type="ECO:0000305" key="24"/>
<evidence type="ECO:0007744" key="25">
    <source>
    </source>
</evidence>
<evidence type="ECO:0007829" key="26">
    <source>
        <dbReference type="PDB" id="2ZND"/>
    </source>
</evidence>
<evidence type="ECO:0007829" key="27">
    <source>
        <dbReference type="PDB" id="2ZNE"/>
    </source>
</evidence>
<evidence type="ECO:0007829" key="28">
    <source>
        <dbReference type="PDB" id="2ZRT"/>
    </source>
</evidence>
<dbReference type="EMBL" id="AF035606">
    <property type="protein sequence ID" value="AAC27697.1"/>
    <property type="molecule type" value="mRNA"/>
</dbReference>
<dbReference type="EMBL" id="U58773">
    <property type="protein sequence ID" value="AAF14336.1"/>
    <property type="molecule type" value="mRNA"/>
</dbReference>
<dbReference type="EMBL" id="AK315370">
    <property type="protein sequence ID" value="BAG37763.1"/>
    <property type="molecule type" value="mRNA"/>
</dbReference>
<dbReference type="EMBL" id="BT020072">
    <property type="protein sequence ID" value="AAV38875.1"/>
    <property type="molecule type" value="mRNA"/>
</dbReference>
<dbReference type="EMBL" id="AC010442">
    <property type="status" value="NOT_ANNOTATED_CDS"/>
    <property type="molecule type" value="Genomic_DNA"/>
</dbReference>
<dbReference type="EMBL" id="AC021087">
    <property type="status" value="NOT_ANNOTATED_CDS"/>
    <property type="molecule type" value="Genomic_DNA"/>
</dbReference>
<dbReference type="EMBL" id="AC118458">
    <property type="status" value="NOT_ANNOTATED_CDS"/>
    <property type="molecule type" value="Genomic_DNA"/>
</dbReference>
<dbReference type="EMBL" id="CH471235">
    <property type="protein sequence ID" value="EAW50991.1"/>
    <property type="molecule type" value="Genomic_DNA"/>
</dbReference>
<dbReference type="EMBL" id="BC012384">
    <property type="protein sequence ID" value="AAH12384.1"/>
    <property type="molecule type" value="mRNA"/>
</dbReference>
<dbReference type="EMBL" id="BC106706">
    <property type="protein sequence ID" value="AAI06707.1"/>
    <property type="molecule type" value="mRNA"/>
</dbReference>
<dbReference type="EMBL" id="BC110291">
    <property type="protein sequence ID" value="AAI10292.1"/>
    <property type="molecule type" value="mRNA"/>
</dbReference>
<dbReference type="EMBL" id="CB991882">
    <property type="status" value="NOT_ANNOTATED_CDS"/>
    <property type="molecule type" value="mRNA"/>
</dbReference>
<dbReference type="CCDS" id="CCDS3854.1">
    <molecule id="O75340-1"/>
</dbReference>
<dbReference type="CCDS" id="CCDS58940.1">
    <molecule id="O75340-2"/>
</dbReference>
<dbReference type="CCDS" id="CCDS58941.1">
    <molecule id="O75340-3"/>
</dbReference>
<dbReference type="RefSeq" id="NP_001254485.1">
    <molecule id="O75340-2"/>
    <property type="nucleotide sequence ID" value="NM_001267556.2"/>
</dbReference>
<dbReference type="RefSeq" id="NP_001254486.1">
    <property type="nucleotide sequence ID" value="NM_001267557.1"/>
</dbReference>
<dbReference type="RefSeq" id="NP_001254487.1">
    <property type="nucleotide sequence ID" value="NM_001267558.1"/>
</dbReference>
<dbReference type="RefSeq" id="NP_001254488.1">
    <molecule id="O75340-3"/>
    <property type="nucleotide sequence ID" value="NM_001267559.2"/>
</dbReference>
<dbReference type="RefSeq" id="NP_037364.1">
    <molecule id="O75340-1"/>
    <property type="nucleotide sequence ID" value="NM_013232.4"/>
</dbReference>
<dbReference type="PDB" id="2ZN8">
    <property type="method" value="X-ray"/>
    <property type="resolution" value="2.70 A"/>
    <property type="chains" value="A=2-191"/>
</dbReference>
<dbReference type="PDB" id="2ZN9">
    <property type="method" value="X-ray"/>
    <property type="resolution" value="2.40 A"/>
    <property type="chains" value="A/B=20-191"/>
</dbReference>
<dbReference type="PDB" id="2ZND">
    <property type="method" value="X-ray"/>
    <property type="resolution" value="1.70 A"/>
    <property type="chains" value="A=20-191"/>
</dbReference>
<dbReference type="PDB" id="2ZNE">
    <property type="method" value="X-ray"/>
    <property type="resolution" value="2.20 A"/>
    <property type="chains" value="A/B=24-191"/>
</dbReference>
<dbReference type="PDB" id="2ZRS">
    <property type="method" value="X-ray"/>
    <property type="resolution" value="3.10 A"/>
    <property type="chains" value="A/B/C/D/E/F/G/H=24-191"/>
</dbReference>
<dbReference type="PDB" id="2ZRT">
    <property type="method" value="X-ray"/>
    <property type="resolution" value="3.30 A"/>
    <property type="chains" value="A/B/C/D/E/F/G/H=24-191"/>
</dbReference>
<dbReference type="PDB" id="3AAJ">
    <property type="method" value="X-ray"/>
    <property type="resolution" value="2.40 A"/>
    <property type="chains" value="A/B=24-191"/>
</dbReference>
<dbReference type="PDB" id="3AAK">
    <property type="method" value="X-ray"/>
    <property type="resolution" value="2.70 A"/>
    <property type="chains" value="A=20-191"/>
</dbReference>
<dbReference type="PDB" id="3WXA">
    <property type="method" value="X-ray"/>
    <property type="resolution" value="2.36 A"/>
    <property type="chains" value="A/B=20-191"/>
</dbReference>
<dbReference type="PDB" id="5GQQ">
    <property type="method" value="X-ray"/>
    <property type="resolution" value="2.20 A"/>
    <property type="chains" value="C/D=24-191"/>
</dbReference>
<dbReference type="PDBsum" id="2ZN8"/>
<dbReference type="PDBsum" id="2ZN9"/>
<dbReference type="PDBsum" id="2ZND"/>
<dbReference type="PDBsum" id="2ZNE"/>
<dbReference type="PDBsum" id="2ZRS"/>
<dbReference type="PDBsum" id="2ZRT"/>
<dbReference type="PDBsum" id="3AAJ"/>
<dbReference type="PDBsum" id="3AAK"/>
<dbReference type="PDBsum" id="3WXA"/>
<dbReference type="PDBsum" id="5GQQ"/>
<dbReference type="SMR" id="O75340"/>
<dbReference type="BioGRID" id="115333">
    <property type="interactions" value="213"/>
</dbReference>
<dbReference type="CORUM" id="O75340"/>
<dbReference type="DIP" id="DIP-33217N"/>
<dbReference type="ELM" id="O75340"/>
<dbReference type="FunCoup" id="O75340">
    <property type="interactions" value="3135"/>
</dbReference>
<dbReference type="IntAct" id="O75340">
    <property type="interactions" value="93"/>
</dbReference>
<dbReference type="MINT" id="O75340"/>
<dbReference type="STRING" id="9606.ENSP00000264933"/>
<dbReference type="ChEMBL" id="CHEMBL4105994"/>
<dbReference type="DrugBank" id="DB01373">
    <property type="generic name" value="Calcium"/>
</dbReference>
<dbReference type="DrugBank" id="DB11093">
    <property type="generic name" value="Calcium citrate"/>
</dbReference>
<dbReference type="DrugBank" id="DB11348">
    <property type="generic name" value="Calcium Phosphate"/>
</dbReference>
<dbReference type="DrugBank" id="DB14481">
    <property type="generic name" value="Calcium phosphate dihydrate"/>
</dbReference>
<dbReference type="DrugBank" id="DB01593">
    <property type="generic name" value="Zinc"/>
</dbReference>
<dbReference type="DrugBank" id="DB14487">
    <property type="generic name" value="Zinc acetate"/>
</dbReference>
<dbReference type="TCDB" id="3.A.5.9.1">
    <property type="family name" value="the general secretory pathway (sec) family"/>
</dbReference>
<dbReference type="GlyGen" id="O75340">
    <property type="glycosylation" value="1 site, 1 O-linked glycan (1 site)"/>
</dbReference>
<dbReference type="iPTMnet" id="O75340"/>
<dbReference type="MetOSite" id="O75340"/>
<dbReference type="PhosphoSitePlus" id="O75340"/>
<dbReference type="SwissPalm" id="O75340"/>
<dbReference type="BioMuta" id="PDCD6"/>
<dbReference type="jPOST" id="O75340"/>
<dbReference type="MassIVE" id="O75340"/>
<dbReference type="PaxDb" id="9606-ENSP00000264933"/>
<dbReference type="PeptideAtlas" id="O75340"/>
<dbReference type="ProteomicsDB" id="18039"/>
<dbReference type="ProteomicsDB" id="49909">
    <molecule id="O75340-1"/>
</dbReference>
<dbReference type="ProteomicsDB" id="61550"/>
<dbReference type="Pumba" id="O75340"/>
<dbReference type="TopDownProteomics" id="O75340-1">
    <molecule id="O75340-1"/>
</dbReference>
<dbReference type="Antibodypedia" id="36748">
    <property type="antibodies" value="326 antibodies from 34 providers"/>
</dbReference>
<dbReference type="DNASU" id="10016"/>
<dbReference type="Ensembl" id="ENST00000264933.9">
    <molecule id="O75340-1"/>
    <property type="protein sequence ID" value="ENSP00000264933.4"/>
    <property type="gene ID" value="ENSG00000249915.9"/>
</dbReference>
<dbReference type="Ensembl" id="ENST00000505221.5">
    <molecule id="O75340-3"/>
    <property type="protein sequence ID" value="ENSP00000422085.1"/>
    <property type="gene ID" value="ENSG00000249915.9"/>
</dbReference>
<dbReference type="Ensembl" id="ENST00000507528.5">
    <molecule id="O75340-2"/>
    <property type="protein sequence ID" value="ENSP00000423815.1"/>
    <property type="gene ID" value="ENSG00000249915.9"/>
</dbReference>
<dbReference type="GeneID" id="10016"/>
<dbReference type="KEGG" id="hsa:10016"/>
<dbReference type="MANE-Select" id="ENST00000264933.9">
    <property type="protein sequence ID" value="ENSP00000264933.4"/>
    <property type="RefSeq nucleotide sequence ID" value="NM_013232.4"/>
    <property type="RefSeq protein sequence ID" value="NP_037364.1"/>
</dbReference>
<dbReference type="UCSC" id="uc003jat.1">
    <molecule id="O75340-1"/>
    <property type="organism name" value="human"/>
</dbReference>
<dbReference type="AGR" id="HGNC:8765"/>
<dbReference type="CTD" id="10016"/>
<dbReference type="DisGeNET" id="10016"/>
<dbReference type="GeneCards" id="PDCD6"/>
<dbReference type="HGNC" id="HGNC:8765">
    <property type="gene designation" value="PDCD6"/>
</dbReference>
<dbReference type="HPA" id="ENSG00000249915">
    <property type="expression patterns" value="Low tissue specificity"/>
</dbReference>
<dbReference type="MIM" id="601057">
    <property type="type" value="gene"/>
</dbReference>
<dbReference type="neXtProt" id="NX_O75340"/>
<dbReference type="OpenTargets" id="ENSG00000249915"/>
<dbReference type="PharmGKB" id="PA33115"/>
<dbReference type="VEuPathDB" id="HostDB:ENSG00000249915"/>
<dbReference type="eggNOG" id="KOG0037">
    <property type="taxonomic scope" value="Eukaryota"/>
</dbReference>
<dbReference type="GeneTree" id="ENSGT00940000160982"/>
<dbReference type="HOGENOM" id="CLU_051357_1_1_1"/>
<dbReference type="InParanoid" id="O75340"/>
<dbReference type="OMA" id="FYNILMH"/>
<dbReference type="OrthoDB" id="186625at2759"/>
<dbReference type="PAN-GO" id="O75340">
    <property type="GO annotations" value="0 GO annotations based on evolutionary models"/>
</dbReference>
<dbReference type="PhylomeDB" id="O75340"/>
<dbReference type="TreeFam" id="TF314682"/>
<dbReference type="PathwayCommons" id="O75340"/>
<dbReference type="SignaLink" id="O75340"/>
<dbReference type="BioGRID-ORCS" id="10016">
    <property type="hits" value="280 hits in 1155 CRISPR screens"/>
</dbReference>
<dbReference type="CD-CODE" id="232F8A39">
    <property type="entry name" value="P-body"/>
</dbReference>
<dbReference type="CD-CODE" id="91857CE7">
    <property type="entry name" value="Nucleolus"/>
</dbReference>
<dbReference type="CD-CODE" id="DEE660B4">
    <property type="entry name" value="Stress granule"/>
</dbReference>
<dbReference type="EvolutionaryTrace" id="O75340"/>
<dbReference type="GeneWiki" id="PDCD6"/>
<dbReference type="GenomeRNAi" id="10016"/>
<dbReference type="Pharos" id="O75340">
    <property type="development level" value="Tbio"/>
</dbReference>
<dbReference type="PRO" id="PR:O75340"/>
<dbReference type="Proteomes" id="UP000005640">
    <property type="component" value="Chromosome 5"/>
</dbReference>
<dbReference type="RNAct" id="O75340">
    <property type="molecule type" value="protein"/>
</dbReference>
<dbReference type="Bgee" id="ENSG00000249915">
    <property type="expression patterns" value="Expressed in lower esophagus mucosa and 96 other cell types or tissues"/>
</dbReference>
<dbReference type="ExpressionAtlas" id="O75340">
    <property type="expression patterns" value="baseline and differential"/>
</dbReference>
<dbReference type="GO" id="GO:0030127">
    <property type="term" value="C:COPII vesicle coat"/>
    <property type="evidence" value="ECO:0000314"/>
    <property type="project" value="UniProtKB"/>
</dbReference>
<dbReference type="GO" id="GO:0031463">
    <property type="term" value="C:Cul3-RING ubiquitin ligase complex"/>
    <property type="evidence" value="ECO:0000314"/>
    <property type="project" value="GO_Central"/>
</dbReference>
<dbReference type="GO" id="GO:0005737">
    <property type="term" value="C:cytoplasm"/>
    <property type="evidence" value="ECO:0000314"/>
    <property type="project" value="UniProtKB"/>
</dbReference>
<dbReference type="GO" id="GO:0031410">
    <property type="term" value="C:cytoplasmic vesicle"/>
    <property type="evidence" value="ECO:0000314"/>
    <property type="project" value="UniProtKB"/>
</dbReference>
<dbReference type="GO" id="GO:0005829">
    <property type="term" value="C:cytosol"/>
    <property type="evidence" value="ECO:0000314"/>
    <property type="project" value="HPA"/>
</dbReference>
<dbReference type="GO" id="GO:0005783">
    <property type="term" value="C:endoplasmic reticulum"/>
    <property type="evidence" value="ECO:0000314"/>
    <property type="project" value="UniProtKB"/>
</dbReference>
<dbReference type="GO" id="GO:0070971">
    <property type="term" value="C:endoplasmic reticulum exit site"/>
    <property type="evidence" value="ECO:0000314"/>
    <property type="project" value="UniProtKB"/>
</dbReference>
<dbReference type="GO" id="GO:0005789">
    <property type="term" value="C:endoplasmic reticulum membrane"/>
    <property type="evidence" value="ECO:0007669"/>
    <property type="project" value="UniProtKB-SubCell"/>
</dbReference>
<dbReference type="GO" id="GO:0005768">
    <property type="term" value="C:endosome"/>
    <property type="evidence" value="ECO:0007669"/>
    <property type="project" value="UniProtKB-SubCell"/>
</dbReference>
<dbReference type="GO" id="GO:0070062">
    <property type="term" value="C:extracellular exosome"/>
    <property type="evidence" value="ECO:0007005"/>
    <property type="project" value="UniProtKB"/>
</dbReference>
<dbReference type="GO" id="GO:0005654">
    <property type="term" value="C:nucleoplasm"/>
    <property type="evidence" value="ECO:0000314"/>
    <property type="project" value="HPA"/>
</dbReference>
<dbReference type="GO" id="GO:0005634">
    <property type="term" value="C:nucleus"/>
    <property type="evidence" value="ECO:0000314"/>
    <property type="project" value="UniProtKB"/>
</dbReference>
<dbReference type="GO" id="GO:0048471">
    <property type="term" value="C:perinuclear region of cytoplasm"/>
    <property type="evidence" value="ECO:0000314"/>
    <property type="project" value="UniProtKB"/>
</dbReference>
<dbReference type="GO" id="GO:0005509">
    <property type="term" value="F:calcium ion binding"/>
    <property type="evidence" value="ECO:0000314"/>
    <property type="project" value="UniProtKB"/>
</dbReference>
<dbReference type="GO" id="GO:0048306">
    <property type="term" value="F:calcium-dependent protein binding"/>
    <property type="evidence" value="ECO:0000315"/>
    <property type="project" value="UniProtKB"/>
</dbReference>
<dbReference type="GO" id="GO:0042802">
    <property type="term" value="F:identical protein binding"/>
    <property type="evidence" value="ECO:0000353"/>
    <property type="project" value="IntAct"/>
</dbReference>
<dbReference type="GO" id="GO:0000287">
    <property type="term" value="F:magnesium ion binding"/>
    <property type="evidence" value="ECO:0000250"/>
    <property type="project" value="UniProtKB"/>
</dbReference>
<dbReference type="GO" id="GO:0046983">
    <property type="term" value="F:protein dimerization activity"/>
    <property type="evidence" value="ECO:0000353"/>
    <property type="project" value="UniProtKB"/>
</dbReference>
<dbReference type="GO" id="GO:0046982">
    <property type="term" value="F:protein heterodimerization activity"/>
    <property type="evidence" value="ECO:0000353"/>
    <property type="project" value="UniProtKB"/>
</dbReference>
<dbReference type="GO" id="GO:0042803">
    <property type="term" value="F:protein homodimerization activity"/>
    <property type="evidence" value="ECO:0000314"/>
    <property type="project" value="UniProtKB"/>
</dbReference>
<dbReference type="GO" id="GO:0030674">
    <property type="term" value="F:protein-macromolecule adaptor activity"/>
    <property type="evidence" value="ECO:0000315"/>
    <property type="project" value="UniProtKB"/>
</dbReference>
<dbReference type="GO" id="GO:0043495">
    <property type="term" value="F:protein-membrane adaptor activity"/>
    <property type="evidence" value="ECO:0000315"/>
    <property type="project" value="UniProtKB"/>
</dbReference>
<dbReference type="GO" id="GO:1990756">
    <property type="term" value="F:ubiquitin-like ligase-substrate adaptor activity"/>
    <property type="evidence" value="ECO:0000315"/>
    <property type="project" value="GO_Central"/>
</dbReference>
<dbReference type="GO" id="GO:0001525">
    <property type="term" value="P:angiogenesis"/>
    <property type="evidence" value="ECO:0007669"/>
    <property type="project" value="UniProtKB-KW"/>
</dbReference>
<dbReference type="GO" id="GO:0097190">
    <property type="term" value="P:apoptotic signaling pathway"/>
    <property type="evidence" value="ECO:0000304"/>
    <property type="project" value="ProtInc"/>
</dbReference>
<dbReference type="GO" id="GO:0034605">
    <property type="term" value="P:cellular response to heat"/>
    <property type="evidence" value="ECO:0000314"/>
    <property type="project" value="UniProtKB"/>
</dbReference>
<dbReference type="GO" id="GO:0048208">
    <property type="term" value="P:COPII vesicle coating"/>
    <property type="evidence" value="ECO:0000315"/>
    <property type="project" value="UniProtKB"/>
</dbReference>
<dbReference type="GO" id="GO:0006888">
    <property type="term" value="P:endoplasmic reticulum to Golgi vesicle-mediated transport"/>
    <property type="evidence" value="ECO:0000315"/>
    <property type="project" value="UniProtKB"/>
</dbReference>
<dbReference type="GO" id="GO:0006886">
    <property type="term" value="P:intracellular protein transport"/>
    <property type="evidence" value="ECO:0000314"/>
    <property type="project" value="UniProtKB"/>
</dbReference>
<dbReference type="GO" id="GO:0051898">
    <property type="term" value="P:negative regulation of phosphatidylinositol 3-kinase/protein kinase B signal transduction"/>
    <property type="evidence" value="ECO:0000314"/>
    <property type="project" value="UniProtKB"/>
</dbReference>
<dbReference type="GO" id="GO:0032007">
    <property type="term" value="P:negative regulation of TOR signaling"/>
    <property type="evidence" value="ECO:0000314"/>
    <property type="project" value="UniProtKB"/>
</dbReference>
<dbReference type="GO" id="GO:0030948">
    <property type="term" value="P:negative regulation of vascular endothelial growth factor receptor signaling pathway"/>
    <property type="evidence" value="ECO:0000314"/>
    <property type="project" value="UniProtKB"/>
</dbReference>
<dbReference type="GO" id="GO:0014032">
    <property type="term" value="P:neural crest cell development"/>
    <property type="evidence" value="ECO:0000315"/>
    <property type="project" value="UniProtKB"/>
</dbReference>
<dbReference type="GO" id="GO:0014029">
    <property type="term" value="P:neural crest formation"/>
    <property type="evidence" value="ECO:0000315"/>
    <property type="project" value="UniProtKB"/>
</dbReference>
<dbReference type="GO" id="GO:0045766">
    <property type="term" value="P:positive regulation of angiogenesis"/>
    <property type="evidence" value="ECO:0000314"/>
    <property type="project" value="UniProtKB"/>
</dbReference>
<dbReference type="GO" id="GO:0043065">
    <property type="term" value="P:positive regulation of apoptotic process"/>
    <property type="evidence" value="ECO:0000314"/>
    <property type="project" value="UniProtKB"/>
</dbReference>
<dbReference type="GO" id="GO:0010595">
    <property type="term" value="P:positive regulation of endothelial cell migration"/>
    <property type="evidence" value="ECO:0000314"/>
    <property type="project" value="UniProtKB"/>
</dbReference>
<dbReference type="GO" id="GO:0001938">
    <property type="term" value="P:positive regulation of endothelial cell proliferation"/>
    <property type="evidence" value="ECO:0000314"/>
    <property type="project" value="UniProtKB"/>
</dbReference>
<dbReference type="GO" id="GO:1902527">
    <property type="term" value="P:positive regulation of protein monoubiquitination"/>
    <property type="evidence" value="ECO:0000315"/>
    <property type="project" value="UniProtKB"/>
</dbReference>
<dbReference type="GO" id="GO:0051592">
    <property type="term" value="P:response to calcium ion"/>
    <property type="evidence" value="ECO:0000314"/>
    <property type="project" value="UniProtKB"/>
</dbReference>
<dbReference type="GO" id="GO:0036324">
    <property type="term" value="P:vascular endothelial growth factor receptor-2 signaling pathway"/>
    <property type="evidence" value="ECO:0000314"/>
    <property type="project" value="UniProtKB"/>
</dbReference>
<dbReference type="CDD" id="cd16183">
    <property type="entry name" value="EFh_PEF_ALG-2"/>
    <property type="match status" value="1"/>
</dbReference>
<dbReference type="FunFam" id="1.10.238.10:FF:000187">
    <property type="entry name" value="Programmed cell death protein 6"/>
    <property type="match status" value="1"/>
</dbReference>
<dbReference type="Gene3D" id="1.10.238.10">
    <property type="entry name" value="EF-hand"/>
    <property type="match status" value="1"/>
</dbReference>
<dbReference type="InterPro" id="IPR011992">
    <property type="entry name" value="EF-hand-dom_pair"/>
</dbReference>
<dbReference type="InterPro" id="IPR018247">
    <property type="entry name" value="EF_Hand_1_Ca_BS"/>
</dbReference>
<dbReference type="InterPro" id="IPR002048">
    <property type="entry name" value="EF_hand_dom"/>
</dbReference>
<dbReference type="InterPro" id="IPR051426">
    <property type="entry name" value="Peflin/Sorcin_CaBP"/>
</dbReference>
<dbReference type="PANTHER" id="PTHR46212">
    <property type="entry name" value="PEFLIN"/>
    <property type="match status" value="1"/>
</dbReference>
<dbReference type="PANTHER" id="PTHR46212:SF9">
    <property type="entry name" value="PROGRAMMED CELL DEATH PROTEIN 6"/>
    <property type="match status" value="1"/>
</dbReference>
<dbReference type="Pfam" id="PF13499">
    <property type="entry name" value="EF-hand_7"/>
    <property type="match status" value="2"/>
</dbReference>
<dbReference type="SMART" id="SM00054">
    <property type="entry name" value="EFh"/>
    <property type="match status" value="5"/>
</dbReference>
<dbReference type="SUPFAM" id="SSF47473">
    <property type="entry name" value="EF-hand"/>
    <property type="match status" value="1"/>
</dbReference>
<dbReference type="PROSITE" id="PS00018">
    <property type="entry name" value="EF_HAND_1"/>
    <property type="match status" value="2"/>
</dbReference>
<dbReference type="PROSITE" id="PS50222">
    <property type="entry name" value="EF_HAND_2"/>
    <property type="match status" value="3"/>
</dbReference>
<name>PDCD6_HUMAN</name>
<accession>O75340</accession>
<accession>B2RD16</accession>
<accession>E7ESR3</accession>
<accession>Q2YDC2</accession>
<accession>Q5TZS0</accession>
<keyword id="KW-0002">3D-structure</keyword>
<keyword id="KW-0007">Acetylation</keyword>
<keyword id="KW-0025">Alternative splicing</keyword>
<keyword id="KW-0037">Angiogenesis</keyword>
<keyword id="KW-0053">Apoptosis</keyword>
<keyword id="KW-0106">Calcium</keyword>
<keyword id="KW-0963">Cytoplasm</keyword>
<keyword id="KW-0968">Cytoplasmic vesicle</keyword>
<keyword id="KW-0256">Endoplasmic reticulum</keyword>
<keyword id="KW-0967">Endosome</keyword>
<keyword id="KW-0460">Magnesium</keyword>
<keyword id="KW-0472">Membrane</keyword>
<keyword id="KW-0479">Metal-binding</keyword>
<keyword id="KW-0539">Nucleus</keyword>
<keyword id="KW-1267">Proteomics identification</keyword>
<keyword id="KW-1185">Reference proteome</keyword>
<keyword id="KW-0677">Repeat</keyword>
<protein>
    <recommendedName>
        <fullName>Programmed cell death protein 6</fullName>
    </recommendedName>
    <alternativeName>
        <fullName evidence="1">Apoptosis-linked gene 2 protein homolog</fullName>
        <shortName evidence="1">ALG-2</shortName>
    </alternativeName>
</protein>
<reference key="1">
    <citation type="submission" date="1997-11" db="EMBL/GenBank/DDBJ databases">
        <authorList>
            <person name="Ganjei J.K."/>
            <person name="D'Adamio L."/>
        </authorList>
    </citation>
    <scope>NUCLEOTIDE SEQUENCE [MRNA] (ISOFORM 1)</scope>
</reference>
<reference key="2">
    <citation type="submission" date="1996-05" db="EMBL/GenBank/DDBJ databases">
        <authorList>
            <person name="Urcelay E."/>
            <person name="Ibarreta D."/>
            <person name="Parrilla R."/>
            <person name="Ayuso M.S."/>
        </authorList>
    </citation>
    <scope>NUCLEOTIDE SEQUENCE [MRNA] (ISOFORM 1)</scope>
    <source>
        <tissue>Liver</tissue>
    </source>
</reference>
<reference key="3">
    <citation type="journal article" date="2004" name="Nat. Genet.">
        <title>Complete sequencing and characterization of 21,243 full-length human cDNAs.</title>
        <authorList>
            <person name="Ota T."/>
            <person name="Suzuki Y."/>
            <person name="Nishikawa T."/>
            <person name="Otsuki T."/>
            <person name="Sugiyama T."/>
            <person name="Irie R."/>
            <person name="Wakamatsu A."/>
            <person name="Hayashi K."/>
            <person name="Sato H."/>
            <person name="Nagai K."/>
            <person name="Kimura K."/>
            <person name="Makita H."/>
            <person name="Sekine M."/>
            <person name="Obayashi M."/>
            <person name="Nishi T."/>
            <person name="Shibahara T."/>
            <person name="Tanaka T."/>
            <person name="Ishii S."/>
            <person name="Yamamoto J."/>
            <person name="Saito K."/>
            <person name="Kawai Y."/>
            <person name="Isono Y."/>
            <person name="Nakamura Y."/>
            <person name="Nagahari K."/>
            <person name="Murakami K."/>
            <person name="Yasuda T."/>
            <person name="Iwayanagi T."/>
            <person name="Wagatsuma M."/>
            <person name="Shiratori A."/>
            <person name="Sudo H."/>
            <person name="Hosoiri T."/>
            <person name="Kaku Y."/>
            <person name="Kodaira H."/>
            <person name="Kondo H."/>
            <person name="Sugawara M."/>
            <person name="Takahashi M."/>
            <person name="Kanda K."/>
            <person name="Yokoi T."/>
            <person name="Furuya T."/>
            <person name="Kikkawa E."/>
            <person name="Omura Y."/>
            <person name="Abe K."/>
            <person name="Kamihara K."/>
            <person name="Katsuta N."/>
            <person name="Sato K."/>
            <person name="Tanikawa M."/>
            <person name="Yamazaki M."/>
            <person name="Ninomiya K."/>
            <person name="Ishibashi T."/>
            <person name="Yamashita H."/>
            <person name="Murakawa K."/>
            <person name="Fujimori K."/>
            <person name="Tanai H."/>
            <person name="Kimata M."/>
            <person name="Watanabe M."/>
            <person name="Hiraoka S."/>
            <person name="Chiba Y."/>
            <person name="Ishida S."/>
            <person name="Ono Y."/>
            <person name="Takiguchi S."/>
            <person name="Watanabe S."/>
            <person name="Yosida M."/>
            <person name="Hotuta T."/>
            <person name="Kusano J."/>
            <person name="Kanehori K."/>
            <person name="Takahashi-Fujii A."/>
            <person name="Hara H."/>
            <person name="Tanase T.-O."/>
            <person name="Nomura Y."/>
            <person name="Togiya S."/>
            <person name="Komai F."/>
            <person name="Hara R."/>
            <person name="Takeuchi K."/>
            <person name="Arita M."/>
            <person name="Imose N."/>
            <person name="Musashino K."/>
            <person name="Yuuki H."/>
            <person name="Oshima A."/>
            <person name="Sasaki N."/>
            <person name="Aotsuka S."/>
            <person name="Yoshikawa Y."/>
            <person name="Matsunawa H."/>
            <person name="Ichihara T."/>
            <person name="Shiohata N."/>
            <person name="Sano S."/>
            <person name="Moriya S."/>
            <person name="Momiyama H."/>
            <person name="Satoh N."/>
            <person name="Takami S."/>
            <person name="Terashima Y."/>
            <person name="Suzuki O."/>
            <person name="Nakagawa S."/>
            <person name="Senoh A."/>
            <person name="Mizoguchi H."/>
            <person name="Goto Y."/>
            <person name="Shimizu F."/>
            <person name="Wakebe H."/>
            <person name="Hishigaki H."/>
            <person name="Watanabe T."/>
            <person name="Sugiyama A."/>
            <person name="Takemoto M."/>
            <person name="Kawakami B."/>
            <person name="Yamazaki M."/>
            <person name="Watanabe K."/>
            <person name="Kumagai A."/>
            <person name="Itakura S."/>
            <person name="Fukuzumi Y."/>
            <person name="Fujimori Y."/>
            <person name="Komiyama M."/>
            <person name="Tashiro H."/>
            <person name="Tanigami A."/>
            <person name="Fujiwara T."/>
            <person name="Ono T."/>
            <person name="Yamada K."/>
            <person name="Fujii Y."/>
            <person name="Ozaki K."/>
            <person name="Hirao M."/>
            <person name="Ohmori Y."/>
            <person name="Kawabata A."/>
            <person name="Hikiji T."/>
            <person name="Kobatake N."/>
            <person name="Inagaki H."/>
            <person name="Ikema Y."/>
            <person name="Okamoto S."/>
            <person name="Okitani R."/>
            <person name="Kawakami T."/>
            <person name="Noguchi S."/>
            <person name="Itoh T."/>
            <person name="Shigeta K."/>
            <person name="Senba T."/>
            <person name="Matsumura K."/>
            <person name="Nakajima Y."/>
            <person name="Mizuno T."/>
            <person name="Morinaga M."/>
            <person name="Sasaki M."/>
            <person name="Togashi T."/>
            <person name="Oyama M."/>
            <person name="Hata H."/>
            <person name="Watanabe M."/>
            <person name="Komatsu T."/>
            <person name="Mizushima-Sugano J."/>
            <person name="Satoh T."/>
            <person name="Shirai Y."/>
            <person name="Takahashi Y."/>
            <person name="Nakagawa K."/>
            <person name="Okumura K."/>
            <person name="Nagase T."/>
            <person name="Nomura N."/>
            <person name="Kikuchi H."/>
            <person name="Masuho Y."/>
            <person name="Yamashita R."/>
            <person name="Nakai K."/>
            <person name="Yada T."/>
            <person name="Nakamura Y."/>
            <person name="Ohara O."/>
            <person name="Isogai T."/>
            <person name="Sugano S."/>
        </authorList>
    </citation>
    <scope>NUCLEOTIDE SEQUENCE [LARGE SCALE MRNA] (ISOFORM 1)</scope>
    <source>
        <tissue>Cerebellum</tissue>
    </source>
</reference>
<reference key="4">
    <citation type="submission" date="2004-10" db="EMBL/GenBank/DDBJ databases">
        <title>Cloning of human full-length CDSs in BD Creator(TM) system donor vector.</title>
        <authorList>
            <person name="Kalnine N."/>
            <person name="Chen X."/>
            <person name="Rolfs A."/>
            <person name="Halleck A."/>
            <person name="Hines L."/>
            <person name="Eisenstein S."/>
            <person name="Koundinya M."/>
            <person name="Raphael J."/>
            <person name="Moreira D."/>
            <person name="Kelley T."/>
            <person name="LaBaer J."/>
            <person name="Lin Y."/>
            <person name="Phelan M."/>
            <person name="Farmer A."/>
        </authorList>
    </citation>
    <scope>NUCLEOTIDE SEQUENCE [LARGE SCALE MRNA] (ISOFORM 1)</scope>
</reference>
<reference key="5">
    <citation type="journal article" date="2004" name="Nature">
        <title>The DNA sequence and comparative analysis of human chromosome 5.</title>
        <authorList>
            <person name="Schmutz J."/>
            <person name="Martin J."/>
            <person name="Terry A."/>
            <person name="Couronne O."/>
            <person name="Grimwood J."/>
            <person name="Lowry S."/>
            <person name="Gordon L.A."/>
            <person name="Scott D."/>
            <person name="Xie G."/>
            <person name="Huang W."/>
            <person name="Hellsten U."/>
            <person name="Tran-Gyamfi M."/>
            <person name="She X."/>
            <person name="Prabhakar S."/>
            <person name="Aerts A."/>
            <person name="Altherr M."/>
            <person name="Bajorek E."/>
            <person name="Black S."/>
            <person name="Branscomb E."/>
            <person name="Caoile C."/>
            <person name="Challacombe J.F."/>
            <person name="Chan Y.M."/>
            <person name="Denys M."/>
            <person name="Detter J.C."/>
            <person name="Escobar J."/>
            <person name="Flowers D."/>
            <person name="Fotopulos D."/>
            <person name="Glavina T."/>
            <person name="Gomez M."/>
            <person name="Gonzales E."/>
            <person name="Goodstein D."/>
            <person name="Grigoriev I."/>
            <person name="Groza M."/>
            <person name="Hammon N."/>
            <person name="Hawkins T."/>
            <person name="Haydu L."/>
            <person name="Israni S."/>
            <person name="Jett J."/>
            <person name="Kadner K."/>
            <person name="Kimball H."/>
            <person name="Kobayashi A."/>
            <person name="Lopez F."/>
            <person name="Lou Y."/>
            <person name="Martinez D."/>
            <person name="Medina C."/>
            <person name="Morgan J."/>
            <person name="Nandkeshwar R."/>
            <person name="Noonan J.P."/>
            <person name="Pitluck S."/>
            <person name="Pollard M."/>
            <person name="Predki P."/>
            <person name="Priest J."/>
            <person name="Ramirez L."/>
            <person name="Retterer J."/>
            <person name="Rodriguez A."/>
            <person name="Rogers S."/>
            <person name="Salamov A."/>
            <person name="Salazar A."/>
            <person name="Thayer N."/>
            <person name="Tice H."/>
            <person name="Tsai M."/>
            <person name="Ustaszewska A."/>
            <person name="Vo N."/>
            <person name="Wheeler J."/>
            <person name="Wu K."/>
            <person name="Yang J."/>
            <person name="Dickson M."/>
            <person name="Cheng J.-F."/>
            <person name="Eichler E.E."/>
            <person name="Olsen A."/>
            <person name="Pennacchio L.A."/>
            <person name="Rokhsar D.S."/>
            <person name="Richardson P."/>
            <person name="Lucas S.M."/>
            <person name="Myers R.M."/>
            <person name="Rubin E.M."/>
        </authorList>
    </citation>
    <scope>NUCLEOTIDE SEQUENCE [LARGE SCALE GENOMIC DNA]</scope>
</reference>
<reference key="6">
    <citation type="submission" date="2005-07" db="EMBL/GenBank/DDBJ databases">
        <authorList>
            <person name="Mural R.J."/>
            <person name="Istrail S."/>
            <person name="Sutton G.G."/>
            <person name="Florea L."/>
            <person name="Halpern A.L."/>
            <person name="Mobarry C.M."/>
            <person name="Lippert R."/>
            <person name="Walenz B."/>
            <person name="Shatkay H."/>
            <person name="Dew I."/>
            <person name="Miller J.R."/>
            <person name="Flanigan M.J."/>
            <person name="Edwards N.J."/>
            <person name="Bolanos R."/>
            <person name="Fasulo D."/>
            <person name="Halldorsson B.V."/>
            <person name="Hannenhalli S."/>
            <person name="Turner R."/>
            <person name="Yooseph S."/>
            <person name="Lu F."/>
            <person name="Nusskern D.R."/>
            <person name="Shue B.C."/>
            <person name="Zheng X.H."/>
            <person name="Zhong F."/>
            <person name="Delcher A.L."/>
            <person name="Huson D.H."/>
            <person name="Kravitz S.A."/>
            <person name="Mouchard L."/>
            <person name="Reinert K."/>
            <person name="Remington K.A."/>
            <person name="Clark A.G."/>
            <person name="Waterman M.S."/>
            <person name="Eichler E.E."/>
            <person name="Adams M.D."/>
            <person name="Hunkapiller M.W."/>
            <person name="Myers E.W."/>
            <person name="Venter J.C."/>
        </authorList>
    </citation>
    <scope>NUCLEOTIDE SEQUENCE [LARGE SCALE GENOMIC DNA]</scope>
</reference>
<reference key="7">
    <citation type="journal article" date="2004" name="Genome Res.">
        <title>The status, quality, and expansion of the NIH full-length cDNA project: the Mammalian Gene Collection (MGC).</title>
        <authorList>
            <consortium name="The MGC Project Team"/>
        </authorList>
    </citation>
    <scope>NUCLEOTIDE SEQUENCE [LARGE SCALE MRNA] (ISOFORMS 1; 2 AND 3)</scope>
    <source>
        <tissue>Colon</tissue>
        <tissue>Ovary</tissue>
        <tissue>Placenta</tissue>
    </source>
</reference>
<reference key="8">
    <citation type="journal article" date="2001" name="J. Biol. Chem.">
        <title>Peflin and ALG-2, members of the penta-EF-hand protein family, form a heterodimer that dissociates in a Ca2+-dependent manner.</title>
        <authorList>
            <person name="Kitaura Y."/>
            <person name="Matsumoto S."/>
            <person name="Satoh H."/>
            <person name="Hitomi K."/>
            <person name="Maki M."/>
        </authorList>
    </citation>
    <scope>INTERACTION WITH PEF1</scope>
</reference>
<reference key="9">
    <citation type="journal article" date="2002" name="Arch. Biochem. Biophys.">
        <title>Both ALG-2 and peflin, penta-EF-hand (PEF) proteins, are stabilized by dimerization through their fifth EF-hand regions.</title>
        <authorList>
            <person name="Kitaura Y."/>
            <person name="Satoh H."/>
            <person name="Takahashi H."/>
            <person name="Shibata H."/>
            <person name="Maki M."/>
        </authorList>
    </citation>
    <scope>INTERACTION WITH PEF1</scope>
</reference>
<reference key="10">
    <citation type="journal article" date="2002" name="Biochem. Biophys. Res. Commun.">
        <title>ALG-2 interacts with the amino-terminal domain of annexin XI in a Ca(2+)-dependent manner.</title>
        <authorList>
            <person name="Satoh H."/>
            <person name="Shibata H."/>
            <person name="Nakano Y."/>
            <person name="Kitaura Y."/>
            <person name="Maki M."/>
        </authorList>
    </citation>
    <scope>INTERACTION WITH ANXA11</scope>
</reference>
<reference key="11">
    <citation type="journal article" date="2005" name="Biotechnol. Lett.">
        <title>Programmed cell death 6 (PDCD6) protein interacts with death-associated protein kinase 1 (DAPk1): additive effect on apoptosis via caspase-3 dependent pathway.</title>
        <authorList>
            <person name="Lee J.H."/>
            <person name="Rho S.B."/>
            <person name="Chun T."/>
        </authorList>
    </citation>
    <scope>FUNCTION</scope>
    <scope>INTERACTION WITH DAPK1</scope>
</reference>
<reference key="12">
    <citation type="journal article" date="2006" name="Biochim. Biophys. Acta">
        <title>Nuclear translocation of the calcium-binding protein ALG-2 induced by the RNA-binding protein RBM22.</title>
        <authorList>
            <person name="Montaville P."/>
            <person name="Dai Y."/>
            <person name="Cheung C.Y."/>
            <person name="Giller K."/>
            <person name="Becker S."/>
            <person name="Michalak M."/>
            <person name="Webb S.E."/>
            <person name="Miller A.L."/>
            <person name="Krebs J."/>
        </authorList>
    </citation>
    <scope>SUBCELLULAR LOCATION</scope>
    <scope>INTERACTION WITH RBM22</scope>
</reference>
<reference key="13">
    <citation type="journal article" date="2006" name="Mol. Biol. Cell">
        <title>The Ca2+-binding protein ALG-2 is recruited to endoplasmic reticulum exit sites by Sec31A and stabilizes the localization of Sec31A.</title>
        <authorList>
            <person name="Yamasaki A."/>
            <person name="Tani K."/>
            <person name="Yamamoto A."/>
            <person name="Kitamura N."/>
            <person name="Komada M."/>
        </authorList>
    </citation>
    <scope>INTERACTION WITH SEC31A AND PDCD6IP</scope>
    <scope>MUTAGENESIS OF GLU-47 AND GLU-114</scope>
    <scope>SUBCELLULAR LOCATION</scope>
</reference>
<reference key="14">
    <citation type="journal article" date="2007" name="Arch. Biochem. Biophys.">
        <title>The calcium binding protein ALG-2 binds and stabilizes Scotin, a p53-inducible gene product localized at the endoplasmic reticulum membrane.</title>
        <authorList>
            <person name="Draeby I."/>
            <person name="Woods Y.L."/>
            <person name="la Cour J.M."/>
            <person name="Mollerup J."/>
            <person name="Bourdon J.C."/>
            <person name="Berchtold M.W."/>
        </authorList>
    </citation>
    <scope>INTERACTION WITH SHISA5</scope>
</reference>
<reference key="15">
    <citation type="journal article" date="2008" name="J. Biol. Chem.">
        <title>Identification of Alix-type and non-Alix-type ALG-2-binding sites in human phospholipid scramblase 3: differential binding to an alternatively spliced isoform and amino acid-substituted mutants.</title>
        <authorList>
            <person name="Shibata H."/>
            <person name="Suzuki H."/>
            <person name="Kakiuchi T."/>
            <person name="Inuzuka T."/>
            <person name="Yoshida H."/>
            <person name="Mizuno T."/>
            <person name="Maki M."/>
        </authorList>
    </citation>
    <scope>INTERACTION WITH PLSCR3; PLSCR4; PDCD6IP; ANXA7; ANXA11; SEC31A AND TSG101</scope>
    <scope>MUTAGENESIS OF GLU-47; TRP-57; PHE-60; TYR-91; TRP-95; GLU-114 AND TYR-180</scope>
</reference>
<reference key="16">
    <citation type="journal article" date="2009" name="Biochem. Biophys. Res. Commun.">
        <title>Penta-EF-hand protein ALG-2 functions as a Ca2+-dependent adaptor that bridges Alix and TSG101.</title>
        <authorList>
            <person name="Okumura M."/>
            <person name="Ichioka F."/>
            <person name="Kobayashi R."/>
            <person name="Suzuki H."/>
            <person name="Yoshida H."/>
            <person name="Shibata H."/>
            <person name="Maki M."/>
        </authorList>
    </citation>
    <scope>FUNCTION</scope>
</reference>
<reference key="17">
    <citation type="journal article" date="2009" name="J. Biol. Chem.">
        <title>Identification of the penta-EF-hand protein ALG-2 as a Ca2+-dependent interactor of mucolipin-1.</title>
        <authorList>
            <person name="Vergarajauregui S."/>
            <person name="Martina J.A."/>
            <person name="Puertollano R."/>
        </authorList>
    </citation>
    <scope>FUNCTION</scope>
    <scope>SUBCELLULAR LOCATION</scope>
    <scope>INTERACTION WITH MCOLN1</scope>
</reference>
<reference key="18">
    <citation type="journal article" date="2011" name="BMC Syst. Biol.">
        <title>Initial characterization of the human central proteome.</title>
        <authorList>
            <person name="Burkard T.R."/>
            <person name="Planyavsky M."/>
            <person name="Kaupe I."/>
            <person name="Breitwieser F.P."/>
            <person name="Buerckstuemmer T."/>
            <person name="Bennett K.L."/>
            <person name="Superti-Furga G."/>
            <person name="Colinge J."/>
        </authorList>
    </citation>
    <scope>IDENTIFICATION BY MASS SPECTROMETRY [LARGE SCALE ANALYSIS]</scope>
</reference>
<reference key="19">
    <citation type="journal article" date="2011" name="Biochim. Biophys. Acta">
        <title>Stress induced subcellular distribution of ALG-2, RBM22 and hSlu7.</title>
        <authorList>
            <person name="Janowicz A."/>
            <person name="Michalak M."/>
            <person name="Krebs J."/>
        </authorList>
    </citation>
    <scope>SUBCELLULAR LOCATION</scope>
</reference>
<reference key="20">
    <citation type="journal article" date="2012" name="Cell. Signal.">
        <title>Programmed cell death 6 (PDCD6) inhibits angiogenesis through PI3K/mTOR/p70S6K pathway by interacting of VEGFR-2.</title>
        <authorList>
            <person name="Rho S.B."/>
            <person name="Song Y.J."/>
            <person name="Lim M.C."/>
            <person name="Lee S.H."/>
            <person name="Kim B.R."/>
            <person name="Park S.Y."/>
        </authorList>
    </citation>
    <scope>FUNCTION</scope>
    <scope>INTERACTION WITH KDR</scope>
</reference>
<reference key="21">
    <citation type="journal article" date="2012" name="Mol. Cell. Proteomics">
        <title>Comparative large-scale characterisation of plant vs. mammal proteins reveals similar and idiosyncratic N-alpha acetylation features.</title>
        <authorList>
            <person name="Bienvenut W.V."/>
            <person name="Sumpton D."/>
            <person name="Martinez A."/>
            <person name="Lilla S."/>
            <person name="Espagne C."/>
            <person name="Meinnel T."/>
            <person name="Giglione C."/>
        </authorList>
    </citation>
    <scope>ACETYLATION [LARGE SCALE ANALYSIS] AT ALA-2</scope>
    <scope>CLEAVAGE OF INITIATOR METHIONINE [LARGE SCALE ANALYSIS]</scope>
    <scope>IDENTIFICATION BY MASS SPECTROMETRY [LARGE SCALE ANALYSIS]</scope>
</reference>
<reference key="22">
    <citation type="journal article" date="2015" name="Proteomics">
        <title>N-terminome analysis of the human mitochondrial proteome.</title>
        <authorList>
            <person name="Vaca Jacome A.S."/>
            <person name="Rabilloud T."/>
            <person name="Schaeffer-Reiss C."/>
            <person name="Rompais M."/>
            <person name="Ayoub D."/>
            <person name="Lane L."/>
            <person name="Bairoch A."/>
            <person name="Van Dorsselaer A."/>
            <person name="Carapito C."/>
        </authorList>
    </citation>
    <scope>IDENTIFICATION BY MASS SPECTROMETRY [LARGE SCALE ANALYSIS]</scope>
</reference>
<reference key="23">
    <citation type="journal article" date="2016" name="Cell">
        <title>Regulation of the CUL3 ubiquitin ligase by a calcium-dependent co-adaptor.</title>
        <authorList>
            <person name="McGourty C.A."/>
            <person name="Akopian D."/>
            <person name="Walsh C."/>
            <person name="Gorur A."/>
            <person name="Werner A."/>
            <person name="Schekman R."/>
            <person name="Bautista D."/>
            <person name="Rape M."/>
        </authorList>
    </citation>
    <scope>FUNCTION</scope>
    <scope>INTERACTION WITH PEF1</scope>
    <scope>SUBCELLULAR LOCATION</scope>
    <scope>MUTAGENESIS OF GLU-47 AND PHE-60</scope>
</reference>
<reference key="24">
    <citation type="journal article" date="2017" name="FEBS J.">
        <title>The calcium-binding protein ALG-2 promotes endoplasmic reticulum exit site localization and polymerization of Trk-fused gene (TFG) protein.</title>
        <authorList>
            <person name="Kanadome T."/>
            <person name="Shibata H."/>
            <person name="Kuwata K."/>
            <person name="Takahara T."/>
            <person name="Maki M."/>
        </authorList>
    </citation>
    <scope>FUNCTION</scope>
    <scope>SUBCELLULAR LOCATION</scope>
    <scope>INTERACTION WITH TFG</scope>
</reference>
<reference key="25">
    <citation type="journal article" date="2008" name="Acta Crystallogr. F">
        <title>Crystallization and X-ray diffraction analysis of N-terminally truncated human ALG-2.</title>
        <authorList>
            <person name="Suzuki H."/>
            <person name="Kawasaki M."/>
            <person name="Kakiuchi T."/>
            <person name="Shibata H."/>
            <person name="Wakatsuki S."/>
            <person name="Maki M."/>
        </authorList>
    </citation>
    <scope>X-RAY CRYSTALLOGRAPHY (3.10 ANGSTROMS) OF 24-191 IN COMPLEX WITH CALCIUM AND ZINC</scope>
</reference>
<reference key="26">
    <citation type="journal article" date="2008" name="Structure">
        <title>Structural basis for Ca2+ -dependent formation of ALG-2/Alix peptide complex: Ca2+/EF3-driven arginine switch mechanism.</title>
        <authorList>
            <person name="Suzuki H."/>
            <person name="Kawasaki M."/>
            <person name="Inuzuka T."/>
            <person name="Okumura M."/>
            <person name="Kakiuchi T."/>
            <person name="Shibata H."/>
            <person name="Wakatsuki S."/>
            <person name="Maki M."/>
        </authorList>
    </citation>
    <scope>X-RAY CRYSTALLOGRAPHY (1.7 ANGSTROMS) OF 24-191 IN COMPLEXES WITH CALCIUM; ZINC AND PDCD6IP</scope>
    <scope>SUBUNIT</scope>
    <scope>INTERACTION WITH PDCD6IP</scope>
</reference>
<reference key="27">
    <citation type="journal article" date="2010" name="BMC Struct. Biol.">
        <title>Molecular basis for defect in Alix-binding by alternatively spliced isoform of ALG-2 (ALG-2DeltaGF122) and structural roles of F122 in target recognition.</title>
        <authorList>
            <person name="Inuzuka T."/>
            <person name="Suzuki H."/>
            <person name="Kawasaki M."/>
            <person name="Shibata H."/>
            <person name="Wakatsuki S."/>
            <person name="Maki M."/>
        </authorList>
    </citation>
    <scope>X-RAY CRYSTALLOGRAPHY (2.4 ANGSTROMS) OF 24-191 IN COMPLEX WITH CALCIUM</scope>
    <scope>INTERACTION WITH PDCD6IP; TSG101; ANXA7 AND ANXA11</scope>
    <scope>CALCIUM-BINDING</scope>
    <scope>DOMAIN</scope>
    <scope>MUTAGENESIS OF PHE-122</scope>
</reference>
<reference key="28">
    <citation type="journal article" date="2015" name="Int. J. Mol. Sci.">
        <title>Structural analysis of the complex between penta-EF-hand ALG-2 protein and Sec31A peptide reveals a novel target recognition mechanism of ALG-2.</title>
        <authorList>
            <person name="Takahashi T."/>
            <person name="Kojima K."/>
            <person name="Zhang W."/>
            <person name="Sasaki K."/>
            <person name="Ito M."/>
            <person name="Suzuki H."/>
            <person name="Kawasaki M."/>
            <person name="Wakatsuki S."/>
            <person name="Takahara T."/>
            <person name="Shibata H."/>
            <person name="Maki M."/>
        </authorList>
    </citation>
    <scope>X-RAY CRYSTALLOGRAPHY (2.36 ANGSTROMS) OF 20-191 IN COMPLEX WITH ZINC AND SEC31A</scope>
    <scope>INTERACTION WITH SEC31A AND PDCD6IP</scope>
    <scope>CALCIUM-BINDING</scope>
    <scope>DOMAIN</scope>
    <scope>MUTAGENESIS OF LEU-52; SER-53; TRP-57; PHE-85; TRP-89; ILE-92 AND PHE-148</scope>
</reference>
<reference key="29">
    <citation type="journal article" date="2016" name="J. Biol. Chem.">
        <title>Structural and functional study of apoptosis-linked gene-2.Heme-binding protein 2 interactions in HIV-1 production.</title>
        <authorList>
            <person name="Ma J."/>
            <person name="Zhang X."/>
            <person name="Feng Y."/>
            <person name="Zhang H."/>
            <person name="Wang X."/>
            <person name="Zheng Y."/>
            <person name="Qiao W."/>
            <person name="Liu X."/>
        </authorList>
    </citation>
    <scope>X-RAY CRYSTALLOGRAPHY (2.20 ANGSTROMS) OF 24-191 IN COMPLEX WITH HEBP2</scope>
    <scope>FUNCTION</scope>
    <scope>INTERACTION WITH HEBP2</scope>
    <scope>SUBCELLULAR LOCATION</scope>
    <scope>MUTAGENESIS OF TRP-57</scope>
</reference>
<reference key="30">
    <citation type="journal article" date="2006" name="Science">
        <title>The consensus coding sequences of human breast and colorectal cancers.</title>
        <authorList>
            <person name="Sjoeblom T."/>
            <person name="Jones S."/>
            <person name="Wood L.D."/>
            <person name="Parsons D.W."/>
            <person name="Lin J."/>
            <person name="Barber T.D."/>
            <person name="Mandelker D."/>
            <person name="Leary R.J."/>
            <person name="Ptak J."/>
            <person name="Silliman N."/>
            <person name="Szabo S."/>
            <person name="Buckhaults P."/>
            <person name="Farrell C."/>
            <person name="Meeh P."/>
            <person name="Markowitz S.D."/>
            <person name="Willis J."/>
            <person name="Dawson D."/>
            <person name="Willson J.K.V."/>
            <person name="Gazdar A.F."/>
            <person name="Hartigan J."/>
            <person name="Wu L."/>
            <person name="Liu C."/>
            <person name="Parmigiani G."/>
            <person name="Park B.H."/>
            <person name="Bachman K.E."/>
            <person name="Papadopoulos N."/>
            <person name="Vogelstein B."/>
            <person name="Kinzler K.W."/>
            <person name="Velculescu V.E."/>
        </authorList>
    </citation>
    <scope>VARIANT [LARGE SCALE ANALYSIS] CYS-123</scope>
</reference>